<comment type="function">
    <text evidence="1">Probably involved in membrane trafficking.</text>
</comment>
<comment type="subcellular location">
    <subcellularLocation>
        <location evidence="1">Cell membrane</location>
        <topology evidence="1">Multi-pass membrane protein</topology>
    </subcellularLocation>
    <subcellularLocation>
        <location evidence="1">Cytoplasmic vesicle</location>
        <location evidence="1">Secretory vesicle membrane</location>
        <topology evidence="1">Multi-pass membrane protein</topology>
    </subcellularLocation>
</comment>
<comment type="similarity">
    <text evidence="4">Belongs to the SCAMP family.</text>
</comment>
<comment type="sequence caution" evidence="4">
    <conflict type="erroneous gene model prediction">
        <sequence resource="EMBL-CDS" id="EAZ24280"/>
    </conflict>
</comment>
<dbReference type="EMBL" id="AP004778">
    <property type="protein sequence ID" value="BAD07864.1"/>
    <property type="molecule type" value="Genomic_DNA"/>
</dbReference>
<dbReference type="EMBL" id="AP008208">
    <property type="protein sequence ID" value="BAF09737.1"/>
    <property type="molecule type" value="Genomic_DNA"/>
</dbReference>
<dbReference type="EMBL" id="AP014958">
    <property type="protein sequence ID" value="BAS80435.1"/>
    <property type="molecule type" value="Genomic_DNA"/>
</dbReference>
<dbReference type="EMBL" id="CM000139">
    <property type="protein sequence ID" value="EAZ24280.1"/>
    <property type="status" value="ALT_SEQ"/>
    <property type="molecule type" value="Genomic_DNA"/>
</dbReference>
<dbReference type="EMBL" id="AK106197">
    <property type="protein sequence ID" value="BAG97634.1"/>
    <property type="molecule type" value="mRNA"/>
</dbReference>
<dbReference type="RefSeq" id="XP_015625721.1">
    <property type="nucleotide sequence ID" value="XM_015770235.1"/>
</dbReference>
<dbReference type="SMR" id="Q6Z8F5"/>
<dbReference type="FunCoup" id="Q6Z8F5">
    <property type="interactions" value="2549"/>
</dbReference>
<dbReference type="STRING" id="39947.Q6Z8F5"/>
<dbReference type="PaxDb" id="39947-Q6Z8F5"/>
<dbReference type="EnsemblPlants" id="Os02t0697800-01">
    <property type="protein sequence ID" value="Os02t0697800-01"/>
    <property type="gene ID" value="Os02g0697800"/>
</dbReference>
<dbReference type="Gramene" id="Os02t0697800-01">
    <property type="protein sequence ID" value="Os02t0697800-01"/>
    <property type="gene ID" value="Os02g0697800"/>
</dbReference>
<dbReference type="eggNOG" id="KOG3088">
    <property type="taxonomic scope" value="Eukaryota"/>
</dbReference>
<dbReference type="HOGENOM" id="CLU_066546_3_0_1"/>
<dbReference type="InParanoid" id="Q6Z8F5"/>
<dbReference type="OMA" id="IYFFQTI"/>
<dbReference type="OrthoDB" id="242866at2759"/>
<dbReference type="Proteomes" id="UP000000763">
    <property type="component" value="Chromosome 2"/>
</dbReference>
<dbReference type="Proteomes" id="UP000007752">
    <property type="component" value="Chromosome 2"/>
</dbReference>
<dbReference type="Proteomes" id="UP000059680">
    <property type="component" value="Chromosome 2"/>
</dbReference>
<dbReference type="GO" id="GO:0005886">
    <property type="term" value="C:plasma membrane"/>
    <property type="evidence" value="ECO:0007669"/>
    <property type="project" value="UniProtKB-SubCell"/>
</dbReference>
<dbReference type="GO" id="GO:0055038">
    <property type="term" value="C:recycling endosome membrane"/>
    <property type="evidence" value="ECO:0000318"/>
    <property type="project" value="GO_Central"/>
</dbReference>
<dbReference type="GO" id="GO:0032588">
    <property type="term" value="C:trans-Golgi network membrane"/>
    <property type="evidence" value="ECO:0000318"/>
    <property type="project" value="GO_Central"/>
</dbReference>
<dbReference type="GO" id="GO:0030658">
    <property type="term" value="C:transport vesicle membrane"/>
    <property type="evidence" value="ECO:0007669"/>
    <property type="project" value="UniProtKB-SubCell"/>
</dbReference>
<dbReference type="GO" id="GO:0015031">
    <property type="term" value="P:protein transport"/>
    <property type="evidence" value="ECO:0000318"/>
    <property type="project" value="GO_Central"/>
</dbReference>
<dbReference type="InterPro" id="IPR007273">
    <property type="entry name" value="SCAMP"/>
</dbReference>
<dbReference type="PANTHER" id="PTHR10687:SF79">
    <property type="entry name" value="SECRETORY CARRIER-ASSOCIATED MEMBRANE PROTEIN 5"/>
    <property type="match status" value="1"/>
</dbReference>
<dbReference type="PANTHER" id="PTHR10687">
    <property type="entry name" value="SECRETORY CARRIER-ASSOCIATED MEMBRANE PROTEIN SCAMP"/>
    <property type="match status" value="1"/>
</dbReference>
<dbReference type="Pfam" id="PF04144">
    <property type="entry name" value="SCAMP"/>
    <property type="match status" value="1"/>
</dbReference>
<feature type="chain" id="PRO_0000304910" description="Secretory carrier-associated membrane protein 5">
    <location>
        <begin position="1"/>
        <end position="281"/>
    </location>
</feature>
<feature type="topological domain" description="Cytoplasmic" evidence="2">
    <location>
        <begin position="1"/>
        <end position="139"/>
    </location>
</feature>
<feature type="transmembrane region" description="Helical" evidence="2">
    <location>
        <begin position="140"/>
        <end position="160"/>
    </location>
</feature>
<feature type="transmembrane region" description="Helical" evidence="2">
    <location>
        <begin position="167"/>
        <end position="187"/>
    </location>
</feature>
<feature type="transmembrane region" description="Helical" evidence="2">
    <location>
        <begin position="202"/>
        <end position="222"/>
    </location>
</feature>
<feature type="transmembrane region" description="Helical" evidence="2">
    <location>
        <begin position="250"/>
        <end position="270"/>
    </location>
</feature>
<feature type="topological domain" description="Cytoplasmic" evidence="2">
    <location>
        <begin position="271"/>
        <end position="281"/>
    </location>
</feature>
<feature type="region of interest" description="Disordered" evidence="3">
    <location>
        <begin position="1"/>
        <end position="49"/>
    </location>
</feature>
<feature type="coiled-coil region" evidence="2">
    <location>
        <begin position="76"/>
        <end position="102"/>
    </location>
</feature>
<feature type="compositionally biased region" description="Gly residues" evidence="3">
    <location>
        <begin position="19"/>
        <end position="49"/>
    </location>
</feature>
<reference key="1">
    <citation type="journal article" date="2005" name="Nature">
        <title>The map-based sequence of the rice genome.</title>
        <authorList>
            <consortium name="International rice genome sequencing project (IRGSP)"/>
        </authorList>
    </citation>
    <scope>NUCLEOTIDE SEQUENCE [LARGE SCALE GENOMIC DNA]</scope>
    <source>
        <strain>cv. Nipponbare</strain>
    </source>
</reference>
<reference key="2">
    <citation type="journal article" date="2008" name="Nucleic Acids Res.">
        <title>The rice annotation project database (RAP-DB): 2008 update.</title>
        <authorList>
            <consortium name="The rice annotation project (RAP)"/>
        </authorList>
    </citation>
    <scope>GENOME REANNOTATION</scope>
    <source>
        <strain>cv. Nipponbare</strain>
    </source>
</reference>
<reference key="3">
    <citation type="journal article" date="2013" name="Rice">
        <title>Improvement of the Oryza sativa Nipponbare reference genome using next generation sequence and optical map data.</title>
        <authorList>
            <person name="Kawahara Y."/>
            <person name="de la Bastide M."/>
            <person name="Hamilton J.P."/>
            <person name="Kanamori H."/>
            <person name="McCombie W.R."/>
            <person name="Ouyang S."/>
            <person name="Schwartz D.C."/>
            <person name="Tanaka T."/>
            <person name="Wu J."/>
            <person name="Zhou S."/>
            <person name="Childs K.L."/>
            <person name="Davidson R.M."/>
            <person name="Lin H."/>
            <person name="Quesada-Ocampo L."/>
            <person name="Vaillancourt B."/>
            <person name="Sakai H."/>
            <person name="Lee S.S."/>
            <person name="Kim J."/>
            <person name="Numa H."/>
            <person name="Itoh T."/>
            <person name="Buell C.R."/>
            <person name="Matsumoto T."/>
        </authorList>
    </citation>
    <scope>GENOME REANNOTATION</scope>
    <source>
        <strain>cv. Nipponbare</strain>
    </source>
</reference>
<reference key="4">
    <citation type="journal article" date="2005" name="PLoS Biol.">
        <title>The genomes of Oryza sativa: a history of duplications.</title>
        <authorList>
            <person name="Yu J."/>
            <person name="Wang J."/>
            <person name="Lin W."/>
            <person name="Li S."/>
            <person name="Li H."/>
            <person name="Zhou J."/>
            <person name="Ni P."/>
            <person name="Dong W."/>
            <person name="Hu S."/>
            <person name="Zeng C."/>
            <person name="Zhang J."/>
            <person name="Zhang Y."/>
            <person name="Li R."/>
            <person name="Xu Z."/>
            <person name="Li S."/>
            <person name="Li X."/>
            <person name="Zheng H."/>
            <person name="Cong L."/>
            <person name="Lin L."/>
            <person name="Yin J."/>
            <person name="Geng J."/>
            <person name="Li G."/>
            <person name="Shi J."/>
            <person name="Liu J."/>
            <person name="Lv H."/>
            <person name="Li J."/>
            <person name="Wang J."/>
            <person name="Deng Y."/>
            <person name="Ran L."/>
            <person name="Shi X."/>
            <person name="Wang X."/>
            <person name="Wu Q."/>
            <person name="Li C."/>
            <person name="Ren X."/>
            <person name="Wang J."/>
            <person name="Wang X."/>
            <person name="Li D."/>
            <person name="Liu D."/>
            <person name="Zhang X."/>
            <person name="Ji Z."/>
            <person name="Zhao W."/>
            <person name="Sun Y."/>
            <person name="Zhang Z."/>
            <person name="Bao J."/>
            <person name="Han Y."/>
            <person name="Dong L."/>
            <person name="Ji J."/>
            <person name="Chen P."/>
            <person name="Wu S."/>
            <person name="Liu J."/>
            <person name="Xiao Y."/>
            <person name="Bu D."/>
            <person name="Tan J."/>
            <person name="Yang L."/>
            <person name="Ye C."/>
            <person name="Zhang J."/>
            <person name="Xu J."/>
            <person name="Zhou Y."/>
            <person name="Yu Y."/>
            <person name="Zhang B."/>
            <person name="Zhuang S."/>
            <person name="Wei H."/>
            <person name="Liu B."/>
            <person name="Lei M."/>
            <person name="Yu H."/>
            <person name="Li Y."/>
            <person name="Xu H."/>
            <person name="Wei S."/>
            <person name="He X."/>
            <person name="Fang L."/>
            <person name="Zhang Z."/>
            <person name="Zhang Y."/>
            <person name="Huang X."/>
            <person name="Su Z."/>
            <person name="Tong W."/>
            <person name="Li J."/>
            <person name="Tong Z."/>
            <person name="Li S."/>
            <person name="Ye J."/>
            <person name="Wang L."/>
            <person name="Fang L."/>
            <person name="Lei T."/>
            <person name="Chen C.-S."/>
            <person name="Chen H.-C."/>
            <person name="Xu Z."/>
            <person name="Li H."/>
            <person name="Huang H."/>
            <person name="Zhang F."/>
            <person name="Xu H."/>
            <person name="Li N."/>
            <person name="Zhao C."/>
            <person name="Li S."/>
            <person name="Dong L."/>
            <person name="Huang Y."/>
            <person name="Li L."/>
            <person name="Xi Y."/>
            <person name="Qi Q."/>
            <person name="Li W."/>
            <person name="Zhang B."/>
            <person name="Hu W."/>
            <person name="Zhang Y."/>
            <person name="Tian X."/>
            <person name="Jiao Y."/>
            <person name="Liang X."/>
            <person name="Jin J."/>
            <person name="Gao L."/>
            <person name="Zheng W."/>
            <person name="Hao B."/>
            <person name="Liu S.-M."/>
            <person name="Wang W."/>
            <person name="Yuan L."/>
            <person name="Cao M."/>
            <person name="McDermott J."/>
            <person name="Samudrala R."/>
            <person name="Wang J."/>
            <person name="Wong G.K.-S."/>
            <person name="Yang H."/>
        </authorList>
    </citation>
    <scope>NUCLEOTIDE SEQUENCE [LARGE SCALE GENOMIC DNA]</scope>
    <source>
        <strain>cv. Nipponbare</strain>
    </source>
</reference>
<reference key="5">
    <citation type="journal article" date="2003" name="Science">
        <title>Collection, mapping, and annotation of over 28,000 cDNA clones from japonica rice.</title>
        <authorList>
            <consortium name="The rice full-length cDNA consortium"/>
        </authorList>
    </citation>
    <scope>NUCLEOTIDE SEQUENCE [LARGE SCALE MRNA]</scope>
    <source>
        <strain>cv. Nipponbare</strain>
    </source>
</reference>
<evidence type="ECO:0000250" key="1"/>
<evidence type="ECO:0000255" key="2"/>
<evidence type="ECO:0000256" key="3">
    <source>
        <dbReference type="SAM" id="MobiDB-lite"/>
    </source>
</evidence>
<evidence type="ECO:0000305" key="4"/>
<keyword id="KW-1003">Cell membrane</keyword>
<keyword id="KW-0175">Coiled coil</keyword>
<keyword id="KW-0968">Cytoplasmic vesicle</keyword>
<keyword id="KW-0472">Membrane</keyword>
<keyword id="KW-1185">Reference proteome</keyword>
<keyword id="KW-0812">Transmembrane</keyword>
<keyword id="KW-1133">Transmembrane helix</keyword>
<keyword id="KW-0813">Transport</keyword>
<organism>
    <name type="scientific">Oryza sativa subsp. japonica</name>
    <name type="common">Rice</name>
    <dbReference type="NCBI Taxonomy" id="39947"/>
    <lineage>
        <taxon>Eukaryota</taxon>
        <taxon>Viridiplantae</taxon>
        <taxon>Streptophyta</taxon>
        <taxon>Embryophyta</taxon>
        <taxon>Tracheophyta</taxon>
        <taxon>Spermatophyta</taxon>
        <taxon>Magnoliopsida</taxon>
        <taxon>Liliopsida</taxon>
        <taxon>Poales</taxon>
        <taxon>Poaceae</taxon>
        <taxon>BOP clade</taxon>
        <taxon>Oryzoideae</taxon>
        <taxon>Oryzeae</taxon>
        <taxon>Oryzinae</taxon>
        <taxon>Oryza</taxon>
        <taxon>Oryza sativa</taxon>
    </lineage>
</organism>
<protein>
    <recommendedName>
        <fullName>Secretory carrier-associated membrane protein 5</fullName>
        <shortName>Secretory carrier membrane protein 5</shortName>
    </recommendedName>
</protein>
<proteinExistence type="evidence at transcript level"/>
<name>SCAM5_ORYSJ</name>
<accession>Q6Z8F5</accession>
<accession>A3AAE1</accession>
<accession>B7EZ37</accession>
<gene>
    <name type="primary">SCAMP5</name>
    <name type="ordered locus">Os02g0697800</name>
    <name type="ordered locus">LOC_Os02g47010</name>
    <name type="ORF">OsJ_007763</name>
    <name type="ORF">P0459B01.9</name>
</gene>
<sequence length="281" mass="30854">MHHDPNPFDEGADDNPFSNGGGGGARRGGGGGGGGGGGGGKSQFSFGFGGLGGGSKGGATVDIPLDNMSDSKGKGKELLQWEADLKRREADIRRREEALKSAGVPMEEKNWPPFFPIIHHDIANEIPANAQKLQYLAFASWLGIVLCLFWNFIAVIVCWIRGGDSKLFFLATIYGMLGMPLSYLMWYRPLYRAMRTDSAFSFGWFFLCYMLHIAFCVFAAIAPPVIFRGKSLTGILAAIDTFSDHAIVGIFYFVGFALFCLETLVSIWVLQKVYMYFRGHK</sequence>